<name>RL5_XYLFA</name>
<feature type="chain" id="PRO_0000125031" description="Large ribosomal subunit protein uL5">
    <location>
        <begin position="1"/>
        <end position="179"/>
    </location>
</feature>
<comment type="function">
    <text evidence="1">This is one of the proteins that bind and probably mediate the attachment of the 5S RNA into the large ribosomal subunit, where it forms part of the central protuberance. In the 70S ribosome it contacts protein S13 of the 30S subunit (bridge B1b), connecting the 2 subunits; this bridge is implicated in subunit movement. Contacts the P site tRNA; the 5S rRNA and some of its associated proteins might help stabilize positioning of ribosome-bound tRNAs.</text>
</comment>
<comment type="subunit">
    <text evidence="1">Part of the 50S ribosomal subunit; part of the 5S rRNA/L5/L18/L25 subcomplex. Contacts the 5S rRNA and the P site tRNA. Forms a bridge to the 30S subunit in the 70S ribosome.</text>
</comment>
<comment type="similarity">
    <text evidence="1">Belongs to the universal ribosomal protein uL5 family.</text>
</comment>
<gene>
    <name evidence="1" type="primary">rplE</name>
    <name type="ordered locus">XF_1164</name>
</gene>
<accession>Q9PE64</accession>
<proteinExistence type="inferred from homology"/>
<organism>
    <name type="scientific">Xylella fastidiosa (strain 9a5c)</name>
    <dbReference type="NCBI Taxonomy" id="160492"/>
    <lineage>
        <taxon>Bacteria</taxon>
        <taxon>Pseudomonadati</taxon>
        <taxon>Pseudomonadota</taxon>
        <taxon>Gammaproteobacteria</taxon>
        <taxon>Lysobacterales</taxon>
        <taxon>Lysobacteraceae</taxon>
        <taxon>Xylella</taxon>
    </lineage>
</organism>
<evidence type="ECO:0000255" key="1">
    <source>
        <dbReference type="HAMAP-Rule" id="MF_01333"/>
    </source>
</evidence>
<evidence type="ECO:0000305" key="2"/>
<sequence length="179" mass="20033">MTRLENMYKKEVVPALIKRFGYSNPMAVPRLVKITLNMGVGEAATNKKVLENAVADMAKISGQRPIVTKSRISVASFKIRNGWPIGCKTTLRRSKMYEFLDRLINISLPCVRDFRGIPPRSFDGRGNFNMGVKEQVVFPEIDFDAVDAIRGMDIAITTTANSDAEAKALLDAFNFPFRN</sequence>
<keyword id="KW-0687">Ribonucleoprotein</keyword>
<keyword id="KW-0689">Ribosomal protein</keyword>
<keyword id="KW-0694">RNA-binding</keyword>
<keyword id="KW-0699">rRNA-binding</keyword>
<keyword id="KW-0820">tRNA-binding</keyword>
<protein>
    <recommendedName>
        <fullName evidence="1">Large ribosomal subunit protein uL5</fullName>
    </recommendedName>
    <alternativeName>
        <fullName evidence="2">50S ribosomal protein L5</fullName>
    </alternativeName>
</protein>
<reference key="1">
    <citation type="journal article" date="2000" name="Nature">
        <title>The genome sequence of the plant pathogen Xylella fastidiosa.</title>
        <authorList>
            <person name="Simpson A.J.G."/>
            <person name="Reinach F.C."/>
            <person name="Arruda P."/>
            <person name="Abreu F.A."/>
            <person name="Acencio M."/>
            <person name="Alvarenga R."/>
            <person name="Alves L.M.C."/>
            <person name="Araya J.E."/>
            <person name="Baia G.S."/>
            <person name="Baptista C.S."/>
            <person name="Barros M.H."/>
            <person name="Bonaccorsi E.D."/>
            <person name="Bordin S."/>
            <person name="Bove J.M."/>
            <person name="Briones M.R.S."/>
            <person name="Bueno M.R.P."/>
            <person name="Camargo A.A."/>
            <person name="Camargo L.E.A."/>
            <person name="Carraro D.M."/>
            <person name="Carrer H."/>
            <person name="Colauto N.B."/>
            <person name="Colombo C."/>
            <person name="Costa F.F."/>
            <person name="Costa M.C.R."/>
            <person name="Costa-Neto C.M."/>
            <person name="Coutinho L.L."/>
            <person name="Cristofani M."/>
            <person name="Dias-Neto E."/>
            <person name="Docena C."/>
            <person name="El-Dorry H."/>
            <person name="Facincani A.P."/>
            <person name="Ferreira A.J.S."/>
            <person name="Ferreira V.C.A."/>
            <person name="Ferro J.A."/>
            <person name="Fraga J.S."/>
            <person name="Franca S.C."/>
            <person name="Franco M.C."/>
            <person name="Frohme M."/>
            <person name="Furlan L.R."/>
            <person name="Garnier M."/>
            <person name="Goldman G.H."/>
            <person name="Goldman M.H.S."/>
            <person name="Gomes S.L."/>
            <person name="Gruber A."/>
            <person name="Ho P.L."/>
            <person name="Hoheisel J.D."/>
            <person name="Junqueira M.L."/>
            <person name="Kemper E.L."/>
            <person name="Kitajima J.P."/>
            <person name="Krieger J.E."/>
            <person name="Kuramae E.E."/>
            <person name="Laigret F."/>
            <person name="Lambais M.R."/>
            <person name="Leite L.C.C."/>
            <person name="Lemos E.G.M."/>
            <person name="Lemos M.V.F."/>
            <person name="Lopes S.A."/>
            <person name="Lopes C.R."/>
            <person name="Machado J.A."/>
            <person name="Machado M.A."/>
            <person name="Madeira A.M.B.N."/>
            <person name="Madeira H.M.F."/>
            <person name="Marino C.L."/>
            <person name="Marques M.V."/>
            <person name="Martins E.A.L."/>
            <person name="Martins E.M.F."/>
            <person name="Matsukuma A.Y."/>
            <person name="Menck C.F.M."/>
            <person name="Miracca E.C."/>
            <person name="Miyaki C.Y."/>
            <person name="Monteiro-Vitorello C.B."/>
            <person name="Moon D.H."/>
            <person name="Nagai M.A."/>
            <person name="Nascimento A.L.T.O."/>
            <person name="Netto L.E.S."/>
            <person name="Nhani A. Jr."/>
            <person name="Nobrega F.G."/>
            <person name="Nunes L.R."/>
            <person name="Oliveira M.A."/>
            <person name="de Oliveira M.C."/>
            <person name="de Oliveira R.C."/>
            <person name="Palmieri D.A."/>
            <person name="Paris A."/>
            <person name="Peixoto B.R."/>
            <person name="Pereira G.A.G."/>
            <person name="Pereira H.A. Jr."/>
            <person name="Pesquero J.B."/>
            <person name="Quaggio R.B."/>
            <person name="Roberto P.G."/>
            <person name="Rodrigues V."/>
            <person name="de Rosa A.J.M."/>
            <person name="de Rosa V.E. Jr."/>
            <person name="de Sa R.G."/>
            <person name="Santelli R.V."/>
            <person name="Sawasaki H.E."/>
            <person name="da Silva A.C.R."/>
            <person name="da Silva A.M."/>
            <person name="da Silva F.R."/>
            <person name="Silva W.A. Jr."/>
            <person name="da Silveira J.F."/>
            <person name="Silvestri M.L.Z."/>
            <person name="Siqueira W.J."/>
            <person name="de Souza A.A."/>
            <person name="de Souza A.P."/>
            <person name="Terenzi M.F."/>
            <person name="Truffi D."/>
            <person name="Tsai S.M."/>
            <person name="Tsuhako M.H."/>
            <person name="Vallada H."/>
            <person name="Van Sluys M.A."/>
            <person name="Verjovski-Almeida S."/>
            <person name="Vettore A.L."/>
            <person name="Zago M.A."/>
            <person name="Zatz M."/>
            <person name="Meidanis J."/>
            <person name="Setubal J.C."/>
        </authorList>
    </citation>
    <scope>NUCLEOTIDE SEQUENCE [LARGE SCALE GENOMIC DNA]</scope>
    <source>
        <strain>9a5c</strain>
    </source>
</reference>
<dbReference type="EMBL" id="AE003849">
    <property type="protein sequence ID" value="AAF83974.1"/>
    <property type="molecule type" value="Genomic_DNA"/>
</dbReference>
<dbReference type="PIR" id="D82718">
    <property type="entry name" value="D82718"/>
</dbReference>
<dbReference type="RefSeq" id="WP_010893678.1">
    <property type="nucleotide sequence ID" value="NC_002488.3"/>
</dbReference>
<dbReference type="SMR" id="Q9PE64"/>
<dbReference type="STRING" id="160492.XF_1164"/>
<dbReference type="KEGG" id="xfa:XF_1164"/>
<dbReference type="eggNOG" id="COG0094">
    <property type="taxonomic scope" value="Bacteria"/>
</dbReference>
<dbReference type="HOGENOM" id="CLU_061015_2_1_6"/>
<dbReference type="Proteomes" id="UP000000812">
    <property type="component" value="Chromosome"/>
</dbReference>
<dbReference type="GO" id="GO:1990904">
    <property type="term" value="C:ribonucleoprotein complex"/>
    <property type="evidence" value="ECO:0007669"/>
    <property type="project" value="UniProtKB-KW"/>
</dbReference>
<dbReference type="GO" id="GO:0005840">
    <property type="term" value="C:ribosome"/>
    <property type="evidence" value="ECO:0007669"/>
    <property type="project" value="UniProtKB-KW"/>
</dbReference>
<dbReference type="GO" id="GO:0019843">
    <property type="term" value="F:rRNA binding"/>
    <property type="evidence" value="ECO:0007669"/>
    <property type="project" value="UniProtKB-UniRule"/>
</dbReference>
<dbReference type="GO" id="GO:0003735">
    <property type="term" value="F:structural constituent of ribosome"/>
    <property type="evidence" value="ECO:0007669"/>
    <property type="project" value="InterPro"/>
</dbReference>
<dbReference type="GO" id="GO:0000049">
    <property type="term" value="F:tRNA binding"/>
    <property type="evidence" value="ECO:0007669"/>
    <property type="project" value="UniProtKB-UniRule"/>
</dbReference>
<dbReference type="GO" id="GO:0006412">
    <property type="term" value="P:translation"/>
    <property type="evidence" value="ECO:0007669"/>
    <property type="project" value="UniProtKB-UniRule"/>
</dbReference>
<dbReference type="FunFam" id="3.30.1440.10:FF:000001">
    <property type="entry name" value="50S ribosomal protein L5"/>
    <property type="match status" value="1"/>
</dbReference>
<dbReference type="Gene3D" id="3.30.1440.10">
    <property type="match status" value="1"/>
</dbReference>
<dbReference type="HAMAP" id="MF_01333_B">
    <property type="entry name" value="Ribosomal_uL5_B"/>
    <property type="match status" value="1"/>
</dbReference>
<dbReference type="InterPro" id="IPR002132">
    <property type="entry name" value="Ribosomal_uL5"/>
</dbReference>
<dbReference type="InterPro" id="IPR020930">
    <property type="entry name" value="Ribosomal_uL5_bac-type"/>
</dbReference>
<dbReference type="InterPro" id="IPR031309">
    <property type="entry name" value="Ribosomal_uL5_C"/>
</dbReference>
<dbReference type="InterPro" id="IPR020929">
    <property type="entry name" value="Ribosomal_uL5_CS"/>
</dbReference>
<dbReference type="InterPro" id="IPR022803">
    <property type="entry name" value="Ribosomal_uL5_dom_sf"/>
</dbReference>
<dbReference type="InterPro" id="IPR031310">
    <property type="entry name" value="Ribosomal_uL5_N"/>
</dbReference>
<dbReference type="NCBIfam" id="NF000585">
    <property type="entry name" value="PRK00010.1"/>
    <property type="match status" value="1"/>
</dbReference>
<dbReference type="PANTHER" id="PTHR11994">
    <property type="entry name" value="60S RIBOSOMAL PROTEIN L11-RELATED"/>
    <property type="match status" value="1"/>
</dbReference>
<dbReference type="Pfam" id="PF00281">
    <property type="entry name" value="Ribosomal_L5"/>
    <property type="match status" value="1"/>
</dbReference>
<dbReference type="Pfam" id="PF00673">
    <property type="entry name" value="Ribosomal_L5_C"/>
    <property type="match status" value="1"/>
</dbReference>
<dbReference type="PIRSF" id="PIRSF002161">
    <property type="entry name" value="Ribosomal_L5"/>
    <property type="match status" value="1"/>
</dbReference>
<dbReference type="SUPFAM" id="SSF55282">
    <property type="entry name" value="RL5-like"/>
    <property type="match status" value="1"/>
</dbReference>
<dbReference type="PROSITE" id="PS00358">
    <property type="entry name" value="RIBOSOMAL_L5"/>
    <property type="match status" value="1"/>
</dbReference>